<sequence length="489" mass="57567">MSSQEIFKKYEQKVVEYQDHIEELKSTKNDYKQLIDTLQHLPDTLQPKIMVPMGKLAFFEGNLKNTNEILILLGDNYFAKRSSKQTIDIIQRRDKDIDTSINDLREQIKGLKQRVSMTTDLSKALHEKEYDNIVEIKEEYNSDEEREKEKKRKQKPQKSTTTTTTTTTSKDKPKTEEEKKKSKEMDEEFDKMLKRLSILEEKENKMGDDYDEEEFNKKFNKKLDITGSDEEYDDDNYNNNNDDDDDNDEDDDREYYQEEGFEDEKPENSNYNKNIEEDDHDDDDDYYDEGEEIVEYYDENGNIVDINDPNVEYIQGDDDNDDNDNEEDEVDVELNESELEEIKDFHMDKKGQDLSEKEVKELTDFYHSKQKKRISYIDTPQPPTPEATTSITPKSILKTNSSGNLMSTIPKSYNENDENDIRRYIKNLDKQEKFENQKTISVPNPPKDVAFSGDIVEKETDLFPFDEIPKPTPPSNAKQSRFKSSRQNK</sequence>
<evidence type="ECO:0000250" key="1"/>
<evidence type="ECO:0000256" key="2">
    <source>
        <dbReference type="SAM" id="MobiDB-lite"/>
    </source>
</evidence>
<evidence type="ECO:0000305" key="3"/>
<reference key="1">
    <citation type="journal article" date="2005" name="Nature">
        <title>The genome of the social amoeba Dictyostelium discoideum.</title>
        <authorList>
            <person name="Eichinger L."/>
            <person name="Pachebat J.A."/>
            <person name="Gloeckner G."/>
            <person name="Rajandream M.A."/>
            <person name="Sucgang R."/>
            <person name="Berriman M."/>
            <person name="Song J."/>
            <person name="Olsen R."/>
            <person name="Szafranski K."/>
            <person name="Xu Q."/>
            <person name="Tunggal B."/>
            <person name="Kummerfeld S."/>
            <person name="Madera M."/>
            <person name="Konfortov B.A."/>
            <person name="Rivero F."/>
            <person name="Bankier A.T."/>
            <person name="Lehmann R."/>
            <person name="Hamlin N."/>
            <person name="Davies R."/>
            <person name="Gaudet P."/>
            <person name="Fey P."/>
            <person name="Pilcher K."/>
            <person name="Chen G."/>
            <person name="Saunders D."/>
            <person name="Sodergren E.J."/>
            <person name="Davis P."/>
            <person name="Kerhornou A."/>
            <person name="Nie X."/>
            <person name="Hall N."/>
            <person name="Anjard C."/>
            <person name="Hemphill L."/>
            <person name="Bason N."/>
            <person name="Farbrother P."/>
            <person name="Desany B."/>
            <person name="Just E."/>
            <person name="Morio T."/>
            <person name="Rost R."/>
            <person name="Churcher C.M."/>
            <person name="Cooper J."/>
            <person name="Haydock S."/>
            <person name="van Driessche N."/>
            <person name="Cronin A."/>
            <person name="Goodhead I."/>
            <person name="Muzny D.M."/>
            <person name="Mourier T."/>
            <person name="Pain A."/>
            <person name="Lu M."/>
            <person name="Harper D."/>
            <person name="Lindsay R."/>
            <person name="Hauser H."/>
            <person name="James K.D."/>
            <person name="Quiles M."/>
            <person name="Madan Babu M."/>
            <person name="Saito T."/>
            <person name="Buchrieser C."/>
            <person name="Wardroper A."/>
            <person name="Felder M."/>
            <person name="Thangavelu M."/>
            <person name="Johnson D."/>
            <person name="Knights A."/>
            <person name="Loulseged H."/>
            <person name="Mungall K.L."/>
            <person name="Oliver K."/>
            <person name="Price C."/>
            <person name="Quail M.A."/>
            <person name="Urushihara H."/>
            <person name="Hernandez J."/>
            <person name="Rabbinowitsch E."/>
            <person name="Steffen D."/>
            <person name="Sanders M."/>
            <person name="Ma J."/>
            <person name="Kohara Y."/>
            <person name="Sharp S."/>
            <person name="Simmonds M.N."/>
            <person name="Spiegler S."/>
            <person name="Tivey A."/>
            <person name="Sugano S."/>
            <person name="White B."/>
            <person name="Walker D."/>
            <person name="Woodward J.R."/>
            <person name="Winckler T."/>
            <person name="Tanaka Y."/>
            <person name="Shaulsky G."/>
            <person name="Schleicher M."/>
            <person name="Weinstock G.M."/>
            <person name="Rosenthal A."/>
            <person name="Cox E.C."/>
            <person name="Chisholm R.L."/>
            <person name="Gibbs R.A."/>
            <person name="Loomis W.F."/>
            <person name="Platzer M."/>
            <person name="Kay R.R."/>
            <person name="Williams J.G."/>
            <person name="Dear P.H."/>
            <person name="Noegel A.A."/>
            <person name="Barrell B.G."/>
            <person name="Kuspa A."/>
        </authorList>
    </citation>
    <scope>NUCLEOTIDE SEQUENCE [LARGE SCALE GENOMIC DNA]</scope>
    <source>
        <strain>AX4</strain>
    </source>
</reference>
<proteinExistence type="inferred from homology"/>
<protein>
    <recommendedName>
        <fullName>RNA polymerase II subunit 5-mediating protein homolog</fullName>
        <shortName>RPB5-mediating protein homolog</shortName>
    </recommendedName>
</protein>
<keyword id="KW-0539">Nucleus</keyword>
<keyword id="KW-1185">Reference proteome</keyword>
<accession>Q54HG4</accession>
<dbReference type="EMBL" id="AAFI02000141">
    <property type="protein sequence ID" value="EAL62718.2"/>
    <property type="molecule type" value="Genomic_DNA"/>
</dbReference>
<dbReference type="RefSeq" id="XP_636221.2">
    <property type="nucleotide sequence ID" value="XM_631129.2"/>
</dbReference>
<dbReference type="SMR" id="Q54HG4"/>
<dbReference type="FunCoup" id="Q54HG4">
    <property type="interactions" value="744"/>
</dbReference>
<dbReference type="STRING" id="44689.Q54HG4"/>
<dbReference type="GlyGen" id="Q54HG4">
    <property type="glycosylation" value="2 sites"/>
</dbReference>
<dbReference type="PaxDb" id="44689-DDB0302504"/>
<dbReference type="EnsemblProtists" id="EAL62718">
    <property type="protein sequence ID" value="EAL62718"/>
    <property type="gene ID" value="DDB_G0289477"/>
</dbReference>
<dbReference type="GeneID" id="8627159"/>
<dbReference type="KEGG" id="ddi:DDB_G0289477"/>
<dbReference type="dictyBase" id="DDB_G0289477">
    <property type="gene designation" value="rmp"/>
</dbReference>
<dbReference type="VEuPathDB" id="AmoebaDB:DDB_G0289477"/>
<dbReference type="eggNOG" id="KOG3130">
    <property type="taxonomic scope" value="Eukaryota"/>
</dbReference>
<dbReference type="HOGENOM" id="CLU_558284_0_0_1"/>
<dbReference type="InParanoid" id="Q54HG4"/>
<dbReference type="OMA" id="ICEVGYF"/>
<dbReference type="PRO" id="PR:Q54HG4"/>
<dbReference type="Proteomes" id="UP000002195">
    <property type="component" value="Chromosome 5"/>
</dbReference>
<dbReference type="GO" id="GO:0005634">
    <property type="term" value="C:nucleus"/>
    <property type="evidence" value="ECO:0007669"/>
    <property type="project" value="UniProtKB-SubCell"/>
</dbReference>
<dbReference type="GO" id="GO:0003682">
    <property type="term" value="F:chromatin binding"/>
    <property type="evidence" value="ECO:0000318"/>
    <property type="project" value="GO_Central"/>
</dbReference>
<dbReference type="GO" id="GO:0019212">
    <property type="term" value="F:phosphatase inhibitor activity"/>
    <property type="evidence" value="ECO:0000318"/>
    <property type="project" value="GO_Central"/>
</dbReference>
<dbReference type="GO" id="GO:0000993">
    <property type="term" value="F:RNA polymerase II complex binding"/>
    <property type="evidence" value="ECO:0000250"/>
    <property type="project" value="UniProtKB"/>
</dbReference>
<dbReference type="GO" id="GO:0003714">
    <property type="term" value="F:transcription corepressor activity"/>
    <property type="evidence" value="ECO:0000250"/>
    <property type="project" value="UniProtKB"/>
</dbReference>
<dbReference type="GO" id="GO:2001243">
    <property type="term" value="P:negative regulation of intrinsic apoptotic signaling pathway"/>
    <property type="evidence" value="ECO:0000318"/>
    <property type="project" value="GO_Central"/>
</dbReference>
<dbReference type="GO" id="GO:0000122">
    <property type="term" value="P:negative regulation of transcription by RNA polymerase II"/>
    <property type="evidence" value="ECO:0000318"/>
    <property type="project" value="GO_Central"/>
</dbReference>
<dbReference type="GO" id="GO:0006357">
    <property type="term" value="P:regulation of transcription by RNA polymerase II"/>
    <property type="evidence" value="ECO:0000250"/>
    <property type="project" value="UniProtKB"/>
</dbReference>
<dbReference type="GO" id="GO:0009615">
    <property type="term" value="P:response to virus"/>
    <property type="evidence" value="ECO:0000250"/>
    <property type="project" value="UniProtKB"/>
</dbReference>
<dbReference type="CDD" id="cd23159">
    <property type="entry name" value="Prefoldin_URI1"/>
    <property type="match status" value="1"/>
</dbReference>
<dbReference type="FunFam" id="1.10.287.370:FF:000058">
    <property type="entry name" value="RNA polymerase II subunit 5-mediating protein homolog"/>
    <property type="match status" value="1"/>
</dbReference>
<dbReference type="Gene3D" id="1.10.287.370">
    <property type="match status" value="1"/>
</dbReference>
<dbReference type="InterPro" id="IPR009053">
    <property type="entry name" value="Prefoldin"/>
</dbReference>
<dbReference type="InterPro" id="IPR004127">
    <property type="entry name" value="Prefoldin_subunit_alpha"/>
</dbReference>
<dbReference type="InterPro" id="IPR052255">
    <property type="entry name" value="RNA_pol_II_subunit5-mediator"/>
</dbReference>
<dbReference type="NCBIfam" id="TIGR00293">
    <property type="entry name" value="prefoldin subunit alpha"/>
    <property type="match status" value="1"/>
</dbReference>
<dbReference type="PANTHER" id="PTHR15111">
    <property type="entry name" value="RNA POLYMERASE II SUBUNIT 5-MEDIATING PROTEIN NNX3"/>
    <property type="match status" value="1"/>
</dbReference>
<dbReference type="PANTHER" id="PTHR15111:SF0">
    <property type="entry name" value="UNCONVENTIONAL PREFOLDIN RPB5 INTERACTOR 1"/>
    <property type="match status" value="1"/>
</dbReference>
<dbReference type="Pfam" id="PF02996">
    <property type="entry name" value="Prefoldin"/>
    <property type="match status" value="1"/>
</dbReference>
<dbReference type="SUPFAM" id="SSF46579">
    <property type="entry name" value="Prefoldin"/>
    <property type="match status" value="1"/>
</dbReference>
<comment type="subcellular location">
    <subcellularLocation>
        <location evidence="1">Nucleus</location>
    </subcellularLocation>
</comment>
<comment type="similarity">
    <text evidence="3">Belongs to the RNA polymerase II subunit 5-mediating protein family.</text>
</comment>
<organism>
    <name type="scientific">Dictyostelium discoideum</name>
    <name type="common">Social amoeba</name>
    <dbReference type="NCBI Taxonomy" id="44689"/>
    <lineage>
        <taxon>Eukaryota</taxon>
        <taxon>Amoebozoa</taxon>
        <taxon>Evosea</taxon>
        <taxon>Eumycetozoa</taxon>
        <taxon>Dictyostelia</taxon>
        <taxon>Dictyosteliales</taxon>
        <taxon>Dictyosteliaceae</taxon>
        <taxon>Dictyostelium</taxon>
    </lineage>
</organism>
<feature type="chain" id="PRO_0000328598" description="RNA polymerase II subunit 5-mediating protein homolog">
    <location>
        <begin position="1"/>
        <end position="489"/>
    </location>
</feature>
<feature type="region of interest" description="Disordered" evidence="2">
    <location>
        <begin position="141"/>
        <end position="188"/>
    </location>
</feature>
<feature type="region of interest" description="Disordered" evidence="2">
    <location>
        <begin position="200"/>
        <end position="329"/>
    </location>
</feature>
<feature type="region of interest" description="Disordered" evidence="2">
    <location>
        <begin position="396"/>
        <end position="415"/>
    </location>
</feature>
<feature type="region of interest" description="Disordered" evidence="2">
    <location>
        <begin position="434"/>
        <end position="489"/>
    </location>
</feature>
<feature type="compositionally biased region" description="Low complexity" evidence="2">
    <location>
        <begin position="157"/>
        <end position="168"/>
    </location>
</feature>
<feature type="compositionally biased region" description="Basic and acidic residues" evidence="2">
    <location>
        <begin position="169"/>
        <end position="188"/>
    </location>
</feature>
<feature type="compositionally biased region" description="Basic and acidic residues" evidence="2">
    <location>
        <begin position="215"/>
        <end position="224"/>
    </location>
</feature>
<feature type="compositionally biased region" description="Acidic residues" evidence="2">
    <location>
        <begin position="227"/>
        <end position="265"/>
    </location>
</feature>
<feature type="compositionally biased region" description="Acidic residues" evidence="2">
    <location>
        <begin position="276"/>
        <end position="298"/>
    </location>
</feature>
<feature type="compositionally biased region" description="Acidic residues" evidence="2">
    <location>
        <begin position="315"/>
        <end position="329"/>
    </location>
</feature>
<feature type="compositionally biased region" description="Polar residues" evidence="2">
    <location>
        <begin position="396"/>
        <end position="413"/>
    </location>
</feature>
<feature type="compositionally biased region" description="Basic residues" evidence="2">
    <location>
        <begin position="480"/>
        <end position="489"/>
    </location>
</feature>
<name>RMP_DICDI</name>
<gene>
    <name type="primary">rmp</name>
    <name type="ORF">DDB_G0289477</name>
</gene>